<name>SDHB1_ARATH</name>
<evidence type="ECO:0000250" key="1"/>
<evidence type="ECO:0000250" key="2">
    <source>
        <dbReference type="UniProtKB" id="P07014"/>
    </source>
</evidence>
<evidence type="ECO:0000255" key="3"/>
<evidence type="ECO:0000255" key="4">
    <source>
        <dbReference type="PROSITE-ProRule" id="PRU00465"/>
    </source>
</evidence>
<evidence type="ECO:0000255" key="5">
    <source>
        <dbReference type="PROSITE-ProRule" id="PRU00711"/>
    </source>
</evidence>
<evidence type="ECO:0000269" key="6">
    <source>
    </source>
</evidence>
<evidence type="ECO:0000269" key="7">
    <source>
    </source>
</evidence>
<evidence type="ECO:0000269" key="8">
    <source>
    </source>
</evidence>
<evidence type="ECO:0000269" key="9">
    <source>
    </source>
</evidence>
<evidence type="ECO:0000305" key="10"/>
<keyword id="KW-0001">2Fe-2S</keyword>
<keyword id="KW-0003">3Fe-4S</keyword>
<keyword id="KW-0004">4Fe-4S</keyword>
<keyword id="KW-0249">Electron transport</keyword>
<keyword id="KW-0408">Iron</keyword>
<keyword id="KW-0411">Iron-sulfur</keyword>
<keyword id="KW-0472">Membrane</keyword>
<keyword id="KW-0479">Metal-binding</keyword>
<keyword id="KW-0496">Mitochondrion</keyword>
<keyword id="KW-0999">Mitochondrion inner membrane</keyword>
<keyword id="KW-0560">Oxidoreductase</keyword>
<keyword id="KW-1185">Reference proteome</keyword>
<keyword id="KW-0809">Transit peptide</keyword>
<keyword id="KW-0813">Transport</keyword>
<keyword id="KW-0816">Tricarboxylic acid cycle</keyword>
<feature type="transit peptide" description="Mitochondrion" evidence="3">
    <location>
        <begin position="1"/>
        <end position="28"/>
    </location>
</feature>
<feature type="chain" id="PRO_0000247595" description="Succinate dehydrogenase [ubiquinone] iron-sulfur subunit 1, mitochondrial">
    <location>
        <begin position="29"/>
        <end position="279"/>
    </location>
</feature>
<feature type="domain" description="2Fe-2S ferredoxin-type" evidence="4">
    <location>
        <begin position="52"/>
        <end position="141"/>
    </location>
</feature>
<feature type="domain" description="4Fe-4S ferredoxin-type" evidence="5">
    <location>
        <begin position="184"/>
        <end position="214"/>
    </location>
</feature>
<feature type="binding site" evidence="2">
    <location>
        <position position="102"/>
    </location>
    <ligand>
        <name>[2Fe-2S] cluster</name>
        <dbReference type="ChEBI" id="CHEBI:190135"/>
    </ligand>
</feature>
<feature type="binding site" evidence="2">
    <location>
        <position position="107"/>
    </location>
    <ligand>
        <name>[2Fe-2S] cluster</name>
        <dbReference type="ChEBI" id="CHEBI:190135"/>
    </ligand>
</feature>
<feature type="binding site" evidence="2">
    <location>
        <position position="122"/>
    </location>
    <ligand>
        <name>[2Fe-2S] cluster</name>
        <dbReference type="ChEBI" id="CHEBI:190135"/>
    </ligand>
</feature>
<feature type="binding site" evidence="2">
    <location>
        <position position="194"/>
    </location>
    <ligand>
        <name>[4Fe-4S] cluster</name>
        <dbReference type="ChEBI" id="CHEBI:49883"/>
    </ligand>
</feature>
<feature type="binding site" evidence="2">
    <location>
        <position position="197"/>
    </location>
    <ligand>
        <name>[4Fe-4S] cluster</name>
        <dbReference type="ChEBI" id="CHEBI:49883"/>
    </ligand>
</feature>
<feature type="binding site" evidence="2">
    <location>
        <position position="200"/>
    </location>
    <ligand>
        <name>[4Fe-4S] cluster</name>
        <dbReference type="ChEBI" id="CHEBI:49883"/>
    </ligand>
</feature>
<feature type="binding site" evidence="2">
    <location>
        <position position="204"/>
    </location>
    <ligand>
        <name>[3Fe-4S] cluster</name>
        <dbReference type="ChEBI" id="CHEBI:21137"/>
    </ligand>
</feature>
<feature type="binding site" evidence="2">
    <location>
        <position position="209"/>
    </location>
    <ligand>
        <name>a ubiquinone</name>
        <dbReference type="ChEBI" id="CHEBI:16389"/>
        <note>ligand shared with SdhD subunit</note>
    </ligand>
</feature>
<feature type="binding site" evidence="2">
    <location>
        <position position="251"/>
    </location>
    <ligand>
        <name>[3Fe-4S] cluster</name>
        <dbReference type="ChEBI" id="CHEBI:21137"/>
    </ligand>
</feature>
<feature type="binding site" evidence="2">
    <location>
        <position position="257"/>
    </location>
    <ligand>
        <name>[3Fe-4S] cluster</name>
        <dbReference type="ChEBI" id="CHEBI:21137"/>
    </ligand>
</feature>
<feature type="binding site" evidence="2">
    <location>
        <position position="261"/>
    </location>
    <ligand>
        <name>[4Fe-4S] cluster</name>
        <dbReference type="ChEBI" id="CHEBI:49883"/>
    </ligand>
</feature>
<feature type="sequence conflict" description="In Ref. 1; CAC19855 and 6; AAM63946." evidence="10" ref="1 6">
    <original>A</original>
    <variation>V</variation>
    <location>
        <position position="20"/>
    </location>
</feature>
<feature type="sequence conflict" description="In Ref. 1; CAC19855 and 6; AAM63946." evidence="10" ref="1 6">
    <original>A</original>
    <variation>V</variation>
    <location>
        <position position="26"/>
    </location>
</feature>
<feature type="sequence conflict" description="In Ref. 6; AAM63946." evidence="10" ref="6">
    <original>C</original>
    <variation>F</variation>
    <location>
        <position position="200"/>
    </location>
</feature>
<accession>Q8LBZ7</accession>
<accession>Q9G3M0</accession>
<accession>Q9LTZ2</accession>
<comment type="function">
    <text evidence="1">Iron-sulfur protein (IP) subunit of succinate dehydrogenase (SDH) that is involved in complex II of the mitochondrial electron transport chain and is responsible for transferring electrons from succinate to ubiquinone (coenzyme Q).</text>
</comment>
<comment type="catalytic activity">
    <reaction>
        <text>a quinone + succinate = fumarate + a quinol</text>
        <dbReference type="Rhea" id="RHEA:40523"/>
        <dbReference type="ChEBI" id="CHEBI:24646"/>
        <dbReference type="ChEBI" id="CHEBI:29806"/>
        <dbReference type="ChEBI" id="CHEBI:30031"/>
        <dbReference type="ChEBI" id="CHEBI:132124"/>
        <dbReference type="EC" id="1.3.5.1"/>
    </reaction>
</comment>
<comment type="cofactor">
    <cofactor evidence="2">
        <name>[2Fe-2S] cluster</name>
        <dbReference type="ChEBI" id="CHEBI:190135"/>
    </cofactor>
    <text evidence="2">Binds 1 [2Fe-2S] cluster.</text>
</comment>
<comment type="cofactor">
    <cofactor evidence="2">
        <name>[3Fe-4S] cluster</name>
        <dbReference type="ChEBI" id="CHEBI:21137"/>
    </cofactor>
    <text evidence="2">Binds 1 [3Fe-4S] cluster.</text>
</comment>
<comment type="cofactor">
    <cofactor evidence="2">
        <name>[4Fe-4S] cluster</name>
        <dbReference type="ChEBI" id="CHEBI:49883"/>
    </cofactor>
    <text evidence="2">Binds 1 [4Fe-4S] cluster.</text>
</comment>
<comment type="pathway">
    <text evidence="10">Carbohydrate metabolism; tricarboxylic acid cycle; fumarate from succinate (eukaryal route): step 1/1.</text>
</comment>
<comment type="subunit">
    <text evidence="9">Component of complex II composed of eight subunits in plants: four classical SDH subunits SDH1, SDH2, SDH3 and SDH4 (a flavoprotein (FP), an iron-sulfur protein (IP), and a cytochrome b composed of a large and a small subunit.), as well as four subunits unknown in mitochondria from bacteria and heterotrophic eukaryotes.</text>
</comment>
<comment type="subcellular location">
    <subcellularLocation>
        <location evidence="7">Mitochondrion inner membrane</location>
        <topology evidence="7">Peripheral membrane protein</topology>
        <orientation evidence="7">Matrix side</orientation>
    </subcellularLocation>
</comment>
<comment type="tissue specificity">
    <text evidence="6 8">Ubiquitous. Preferentially expressed in flowers and inflorescences.</text>
</comment>
<comment type="developmental stage">
    <text evidence="8">Expressed in floral meristems and sex organ primordia at early stages of development. Later expressed in anthers, particularly in the tapetum, pollen mother cells, and microspores.</text>
</comment>
<comment type="similarity">
    <text evidence="10">Belongs to the succinate dehydrogenase/fumarate reductase iron-sulfur protein family.</text>
</comment>
<organism>
    <name type="scientific">Arabidopsis thaliana</name>
    <name type="common">Mouse-ear cress</name>
    <dbReference type="NCBI Taxonomy" id="3702"/>
    <lineage>
        <taxon>Eukaryota</taxon>
        <taxon>Viridiplantae</taxon>
        <taxon>Streptophyta</taxon>
        <taxon>Embryophyta</taxon>
        <taxon>Tracheophyta</taxon>
        <taxon>Spermatophyta</taxon>
        <taxon>Magnoliopsida</taxon>
        <taxon>eudicotyledons</taxon>
        <taxon>Gunneridae</taxon>
        <taxon>Pentapetalae</taxon>
        <taxon>rosids</taxon>
        <taxon>malvids</taxon>
        <taxon>Brassicales</taxon>
        <taxon>Brassicaceae</taxon>
        <taxon>Camelineae</taxon>
        <taxon>Arabidopsis</taxon>
    </lineage>
</organism>
<reference key="1">
    <citation type="journal article" date="2001" name="Plant Mol. Biol.">
        <title>Three different genes encode the iron-sulphur subunit of succinate dehydrogenase in Arabidopsis thaliana.</title>
        <authorList>
            <person name="Figueroa P."/>
            <person name="Leon G."/>
            <person name="Elorza A."/>
            <person name="Holuigue L."/>
            <person name="Jordana X."/>
        </authorList>
    </citation>
    <scope>NUCLEOTIDE SEQUENCE [MRNA]</scope>
    <scope>TISSUE SPECIFICITY</scope>
    <source>
        <strain>cv. Columbia</strain>
    </source>
</reference>
<reference key="2">
    <citation type="journal article" date="2000" name="DNA Res.">
        <title>Structural analysis of Arabidopsis thaliana chromosome 3. I. Sequence features of the regions of 4,504,864 bp covered by sixty P1 and TAC clones.</title>
        <authorList>
            <person name="Sato S."/>
            <person name="Nakamura Y."/>
            <person name="Kaneko T."/>
            <person name="Katoh T."/>
            <person name="Asamizu E."/>
            <person name="Tabata S."/>
        </authorList>
    </citation>
    <scope>NUCLEOTIDE SEQUENCE [LARGE SCALE GENOMIC DNA]</scope>
    <source>
        <strain>cv. Columbia</strain>
    </source>
</reference>
<reference key="3">
    <citation type="journal article" date="2017" name="Plant J.">
        <title>Araport11: a complete reannotation of the Arabidopsis thaliana reference genome.</title>
        <authorList>
            <person name="Cheng C.Y."/>
            <person name="Krishnakumar V."/>
            <person name="Chan A.P."/>
            <person name="Thibaud-Nissen F."/>
            <person name="Schobel S."/>
            <person name="Town C.D."/>
        </authorList>
    </citation>
    <scope>GENOME REANNOTATION</scope>
    <source>
        <strain>cv. Columbia</strain>
    </source>
</reference>
<reference key="4">
    <citation type="journal article" date="2003" name="Science">
        <title>Empirical analysis of transcriptional activity in the Arabidopsis genome.</title>
        <authorList>
            <person name="Yamada K."/>
            <person name="Lim J."/>
            <person name="Dale J.M."/>
            <person name="Chen H."/>
            <person name="Shinn P."/>
            <person name="Palm C.J."/>
            <person name="Southwick A.M."/>
            <person name="Wu H.C."/>
            <person name="Kim C.J."/>
            <person name="Nguyen M."/>
            <person name="Pham P.K."/>
            <person name="Cheuk R.F."/>
            <person name="Karlin-Newmann G."/>
            <person name="Liu S.X."/>
            <person name="Lam B."/>
            <person name="Sakano H."/>
            <person name="Wu T."/>
            <person name="Yu G."/>
            <person name="Miranda M."/>
            <person name="Quach H.L."/>
            <person name="Tripp M."/>
            <person name="Chang C.H."/>
            <person name="Lee J.M."/>
            <person name="Toriumi M.J."/>
            <person name="Chan M.M."/>
            <person name="Tang C.C."/>
            <person name="Onodera C.S."/>
            <person name="Deng J.M."/>
            <person name="Akiyama K."/>
            <person name="Ansari Y."/>
            <person name="Arakawa T."/>
            <person name="Banh J."/>
            <person name="Banno F."/>
            <person name="Bowser L."/>
            <person name="Brooks S.Y."/>
            <person name="Carninci P."/>
            <person name="Chao Q."/>
            <person name="Choy N."/>
            <person name="Enju A."/>
            <person name="Goldsmith A.D."/>
            <person name="Gurjal M."/>
            <person name="Hansen N.F."/>
            <person name="Hayashizaki Y."/>
            <person name="Johnson-Hopson C."/>
            <person name="Hsuan V.W."/>
            <person name="Iida K."/>
            <person name="Karnes M."/>
            <person name="Khan S."/>
            <person name="Koesema E."/>
            <person name="Ishida J."/>
            <person name="Jiang P.X."/>
            <person name="Jones T."/>
            <person name="Kawai J."/>
            <person name="Kamiya A."/>
            <person name="Meyers C."/>
            <person name="Nakajima M."/>
            <person name="Narusaka M."/>
            <person name="Seki M."/>
            <person name="Sakurai T."/>
            <person name="Satou M."/>
            <person name="Tamse R."/>
            <person name="Vaysberg M."/>
            <person name="Wallender E.K."/>
            <person name="Wong C."/>
            <person name="Yamamura Y."/>
            <person name="Yuan S."/>
            <person name="Shinozaki K."/>
            <person name="Davis R.W."/>
            <person name="Theologis A."/>
            <person name="Ecker J.R."/>
        </authorList>
    </citation>
    <scope>NUCLEOTIDE SEQUENCE [LARGE SCALE MRNA]</scope>
    <source>
        <strain>cv. Columbia</strain>
    </source>
</reference>
<reference key="5">
    <citation type="submission" date="2005-02" db="EMBL/GenBank/DDBJ databases">
        <authorList>
            <person name="Underwood B.A."/>
            <person name="Xiao Y.-L."/>
            <person name="Moskal W.A. Jr."/>
            <person name="Monaghan E.L."/>
            <person name="Wang W."/>
            <person name="Redman J.C."/>
            <person name="Wu H.C."/>
            <person name="Utterback T."/>
            <person name="Town C.D."/>
        </authorList>
    </citation>
    <scope>NUCLEOTIDE SEQUENCE [LARGE SCALE MRNA]</scope>
    <source>
        <strain>cv. Columbia</strain>
    </source>
</reference>
<reference key="6">
    <citation type="submission" date="2002-03" db="EMBL/GenBank/DDBJ databases">
        <title>Full-length cDNA from Arabidopsis thaliana.</title>
        <authorList>
            <person name="Brover V.V."/>
            <person name="Troukhan M.E."/>
            <person name="Alexandrov N.A."/>
            <person name="Lu Y.-P."/>
            <person name="Flavell R.B."/>
            <person name="Feldmann K.A."/>
        </authorList>
    </citation>
    <scope>NUCLEOTIDE SEQUENCE [LARGE SCALE MRNA]</scope>
</reference>
<reference key="7">
    <citation type="journal article" date="2004" name="Plant Cell">
        <title>Experimental analysis of the Arabidopsis mitochondrial proteome highlights signaling and regulatory components, provides assessment of targeting prediction programs, and indicates plant-specific mitochondrial proteins.</title>
        <authorList>
            <person name="Heazlewood J.L."/>
            <person name="Tonti-Filippini J.S."/>
            <person name="Gout A.M."/>
            <person name="Day D.A."/>
            <person name="Whelan J."/>
            <person name="Millar A.H."/>
        </authorList>
    </citation>
    <scope>IDENTIFICATION BY MASS SPECTROMETRY</scope>
    <scope>SUBCELLULAR LOCATION [LARGE SCALE ANALYSIS]</scope>
    <source>
        <strain>cv. Landsberg erecta</strain>
    </source>
</reference>
<reference key="8">
    <citation type="journal article" date="2003" name="Plant Physiol.">
        <title>New insights into the respiratory chain of plant mitochondria. Supercomplexes and a unique composition of complex II.</title>
        <authorList>
            <person name="Eubel H."/>
            <person name="Jansch L."/>
            <person name="Braun H.P."/>
        </authorList>
    </citation>
    <scope>IDENTIFICATION BY MASS SPECTROMETRY</scope>
</reference>
<reference key="9">
    <citation type="journal article" date="2004" name="Plant Mol. Biol.">
        <title>Mitochondrial cytochrome c oxidase and succinate dehydrogenase complexes contain plant specific subunits.</title>
        <authorList>
            <person name="Millar A.H."/>
            <person name="Eubel H."/>
            <person name="Jansch L."/>
            <person name="Kruft V."/>
            <person name="Heazlewood J.L."/>
            <person name="Braun H.P."/>
        </authorList>
    </citation>
    <scope>IDENTIFICATION BY MASS SPECTROMETRY</scope>
    <scope>SUBUNIT</scope>
</reference>
<reference key="10">
    <citation type="journal article" date="2004" name="Plant Physiol.">
        <title>Nuclear SDH2-1 and SDH2-2 genes, encoding the iron-sulfur subunit of mitochondrial complex II in Arabidopsis, have distinct cell-specific expression patterns and promoter activities.</title>
        <authorList>
            <person name="Elorza A."/>
            <person name="Leon G."/>
            <person name="Gomez I."/>
            <person name="Mouras A."/>
            <person name="Holuigue L."/>
            <person name="Araya A."/>
            <person name="Jordana X."/>
        </authorList>
    </citation>
    <scope>DEVELOPMENTAL STAGE</scope>
    <scope>TISSUE SPECIFICITY</scope>
</reference>
<gene>
    <name type="primary">SDH2-1</name>
    <name type="ordered locus">At3g27380</name>
    <name type="ORF">K1G2.9</name>
</gene>
<proteinExistence type="evidence at protein level"/>
<protein>
    <recommendedName>
        <fullName>Succinate dehydrogenase [ubiquinone] iron-sulfur subunit 1, mitochondrial</fullName>
        <ecNumber>1.3.5.1</ecNumber>
    </recommendedName>
    <alternativeName>
        <fullName>Iron-sulfur subunit of complex II</fullName>
        <shortName>Ip</shortName>
    </alternativeName>
</protein>
<dbReference type="EC" id="1.3.5.1"/>
<dbReference type="EMBL" id="AJ278910">
    <property type="protein sequence ID" value="CAC19855.1"/>
    <property type="molecule type" value="mRNA"/>
</dbReference>
<dbReference type="EMBL" id="AB024028">
    <property type="protein sequence ID" value="BAA95713.1"/>
    <property type="molecule type" value="Genomic_DNA"/>
</dbReference>
<dbReference type="EMBL" id="CP002686">
    <property type="protein sequence ID" value="AEE77309.1"/>
    <property type="molecule type" value="Genomic_DNA"/>
</dbReference>
<dbReference type="EMBL" id="CP002686">
    <property type="protein sequence ID" value="AEE77310.1"/>
    <property type="molecule type" value="Genomic_DNA"/>
</dbReference>
<dbReference type="EMBL" id="AY035013">
    <property type="protein sequence ID" value="AAK59518.1"/>
    <property type="molecule type" value="mRNA"/>
</dbReference>
<dbReference type="EMBL" id="AY063053">
    <property type="protein sequence ID" value="AAL34227.1"/>
    <property type="molecule type" value="mRNA"/>
</dbReference>
<dbReference type="EMBL" id="AY924777">
    <property type="protein sequence ID" value="AAX23852.1"/>
    <property type="molecule type" value="mRNA"/>
</dbReference>
<dbReference type="EMBL" id="AY086901">
    <property type="protein sequence ID" value="AAM63946.1"/>
    <property type="molecule type" value="mRNA"/>
</dbReference>
<dbReference type="RefSeq" id="NP_001118718.1">
    <property type="nucleotide sequence ID" value="NM_001125246.1"/>
</dbReference>
<dbReference type="RefSeq" id="NP_189374.1">
    <property type="nucleotide sequence ID" value="NM_113653.4"/>
</dbReference>
<dbReference type="SMR" id="Q8LBZ7"/>
<dbReference type="BioGRID" id="7689">
    <property type="interactions" value="5"/>
</dbReference>
<dbReference type="FunCoup" id="Q8LBZ7">
    <property type="interactions" value="3350"/>
</dbReference>
<dbReference type="IntAct" id="Q8LBZ7">
    <property type="interactions" value="2"/>
</dbReference>
<dbReference type="MINT" id="Q8LBZ7"/>
<dbReference type="STRING" id="3702.Q8LBZ7"/>
<dbReference type="PaxDb" id="3702-AT3G27380.2"/>
<dbReference type="ProteomicsDB" id="232923"/>
<dbReference type="EnsemblPlants" id="AT3G27380.1">
    <property type="protein sequence ID" value="AT3G27380.1"/>
    <property type="gene ID" value="AT3G27380"/>
</dbReference>
<dbReference type="EnsemblPlants" id="AT3G27380.2">
    <property type="protein sequence ID" value="AT3G27380.2"/>
    <property type="gene ID" value="AT3G27380"/>
</dbReference>
<dbReference type="GeneID" id="822359"/>
<dbReference type="Gramene" id="AT3G27380.1">
    <property type="protein sequence ID" value="AT3G27380.1"/>
    <property type="gene ID" value="AT3G27380"/>
</dbReference>
<dbReference type="Gramene" id="AT3G27380.2">
    <property type="protein sequence ID" value="AT3G27380.2"/>
    <property type="gene ID" value="AT3G27380"/>
</dbReference>
<dbReference type="KEGG" id="ath:AT3G27380"/>
<dbReference type="Araport" id="AT3G27380"/>
<dbReference type="TAIR" id="AT3G27380">
    <property type="gene designation" value="SDH2-1"/>
</dbReference>
<dbReference type="eggNOG" id="KOG3049">
    <property type="taxonomic scope" value="Eukaryota"/>
</dbReference>
<dbReference type="HOGENOM" id="CLU_044838_0_2_1"/>
<dbReference type="InParanoid" id="Q8LBZ7"/>
<dbReference type="OMA" id="SNMKTFQ"/>
<dbReference type="OrthoDB" id="1696654at2759"/>
<dbReference type="PhylomeDB" id="Q8LBZ7"/>
<dbReference type="BRENDA" id="1.3.5.1">
    <property type="organism ID" value="399"/>
</dbReference>
<dbReference type="UniPathway" id="UPA00223">
    <property type="reaction ID" value="UER01006"/>
</dbReference>
<dbReference type="CD-CODE" id="4299E36E">
    <property type="entry name" value="Nucleolus"/>
</dbReference>
<dbReference type="PRO" id="PR:Q8LBZ7"/>
<dbReference type="Proteomes" id="UP000006548">
    <property type="component" value="Chromosome 3"/>
</dbReference>
<dbReference type="ExpressionAtlas" id="Q8LBZ7">
    <property type="expression patterns" value="baseline and differential"/>
</dbReference>
<dbReference type="GO" id="GO:0005829">
    <property type="term" value="C:cytosol"/>
    <property type="evidence" value="ECO:0007005"/>
    <property type="project" value="TAIR"/>
</dbReference>
<dbReference type="GO" id="GO:0005743">
    <property type="term" value="C:mitochondrial inner membrane"/>
    <property type="evidence" value="ECO:0007669"/>
    <property type="project" value="UniProtKB-SubCell"/>
</dbReference>
<dbReference type="GO" id="GO:0005739">
    <property type="term" value="C:mitochondrion"/>
    <property type="evidence" value="ECO:0000314"/>
    <property type="project" value="TAIR"/>
</dbReference>
<dbReference type="GO" id="GO:0045273">
    <property type="term" value="C:respiratory chain complex II (succinate dehydrogenase)"/>
    <property type="evidence" value="ECO:0000314"/>
    <property type="project" value="UniProtKB"/>
</dbReference>
<dbReference type="GO" id="GO:0051537">
    <property type="term" value="F:2 iron, 2 sulfur cluster binding"/>
    <property type="evidence" value="ECO:0007669"/>
    <property type="project" value="UniProtKB-KW"/>
</dbReference>
<dbReference type="GO" id="GO:0051538">
    <property type="term" value="F:3 iron, 4 sulfur cluster binding"/>
    <property type="evidence" value="ECO:0007669"/>
    <property type="project" value="UniProtKB-KW"/>
</dbReference>
<dbReference type="GO" id="GO:0051539">
    <property type="term" value="F:4 iron, 4 sulfur cluster binding"/>
    <property type="evidence" value="ECO:0007669"/>
    <property type="project" value="UniProtKB-KW"/>
</dbReference>
<dbReference type="GO" id="GO:0009055">
    <property type="term" value="F:electron transfer activity"/>
    <property type="evidence" value="ECO:0000250"/>
    <property type="project" value="TAIR"/>
</dbReference>
<dbReference type="GO" id="GO:0008177">
    <property type="term" value="F:succinate dehydrogenase (quinone) activity"/>
    <property type="evidence" value="ECO:0007669"/>
    <property type="project" value="UniProtKB-EC"/>
</dbReference>
<dbReference type="GO" id="GO:0000104">
    <property type="term" value="F:succinate dehydrogenase activity"/>
    <property type="evidence" value="ECO:0000250"/>
    <property type="project" value="TAIR"/>
</dbReference>
<dbReference type="GO" id="GO:0008270">
    <property type="term" value="F:zinc ion binding"/>
    <property type="evidence" value="ECO:0007005"/>
    <property type="project" value="TAIR"/>
</dbReference>
<dbReference type="GO" id="GO:0006121">
    <property type="term" value="P:mitochondrial electron transport, succinate to ubiquinone"/>
    <property type="evidence" value="ECO:0000250"/>
    <property type="project" value="TAIR"/>
</dbReference>
<dbReference type="GO" id="GO:0006099">
    <property type="term" value="P:tricarboxylic acid cycle"/>
    <property type="evidence" value="ECO:0007669"/>
    <property type="project" value="UniProtKB-UniPathway"/>
</dbReference>
<dbReference type="FunFam" id="3.10.20.30:FF:000007">
    <property type="entry name" value="Succinate dehydrogenase [ubiquinone] iron-sulfur subunit, mitochondrial"/>
    <property type="match status" value="1"/>
</dbReference>
<dbReference type="FunFam" id="1.10.1060.10:FF:000001">
    <property type="entry name" value="Succinate dehydrogenase iron-sulfur subunit SdhB"/>
    <property type="match status" value="1"/>
</dbReference>
<dbReference type="Gene3D" id="3.10.20.30">
    <property type="match status" value="1"/>
</dbReference>
<dbReference type="Gene3D" id="1.10.1060.10">
    <property type="entry name" value="Alpha-helical ferredoxin"/>
    <property type="match status" value="1"/>
</dbReference>
<dbReference type="InterPro" id="IPR036010">
    <property type="entry name" value="2Fe-2S_ferredoxin-like_sf"/>
</dbReference>
<dbReference type="InterPro" id="IPR001041">
    <property type="entry name" value="2Fe-2S_ferredoxin-type"/>
</dbReference>
<dbReference type="InterPro" id="IPR006058">
    <property type="entry name" value="2Fe2S_fd_BS"/>
</dbReference>
<dbReference type="InterPro" id="IPR017896">
    <property type="entry name" value="4Fe4S_Fe-S-bd"/>
</dbReference>
<dbReference type="InterPro" id="IPR017900">
    <property type="entry name" value="4Fe4S_Fe_S_CS"/>
</dbReference>
<dbReference type="InterPro" id="IPR012675">
    <property type="entry name" value="Beta-grasp_dom_sf"/>
</dbReference>
<dbReference type="InterPro" id="IPR009051">
    <property type="entry name" value="Helical_ferredxn"/>
</dbReference>
<dbReference type="InterPro" id="IPR050573">
    <property type="entry name" value="SDH/FRD_Iron-Sulfur"/>
</dbReference>
<dbReference type="InterPro" id="IPR004489">
    <property type="entry name" value="Succ_DH/fum_Rdtase_Fe-S"/>
</dbReference>
<dbReference type="InterPro" id="IPR025192">
    <property type="entry name" value="Succ_DH/fum_Rdtase_N"/>
</dbReference>
<dbReference type="NCBIfam" id="TIGR00384">
    <property type="entry name" value="dhsB"/>
    <property type="match status" value="1"/>
</dbReference>
<dbReference type="NCBIfam" id="NF004616">
    <property type="entry name" value="PRK05950.1"/>
    <property type="match status" value="1"/>
</dbReference>
<dbReference type="PANTHER" id="PTHR11921:SF29">
    <property type="entry name" value="SUCCINATE DEHYDROGENASE [UBIQUINONE] IRON-SULFUR SUBUNIT, MITOCHONDRIAL"/>
    <property type="match status" value="1"/>
</dbReference>
<dbReference type="PANTHER" id="PTHR11921">
    <property type="entry name" value="SUCCINATE DEHYDROGENASE IRON-SULFUR PROTEIN"/>
    <property type="match status" value="1"/>
</dbReference>
<dbReference type="Pfam" id="PF13085">
    <property type="entry name" value="Fer2_3"/>
    <property type="match status" value="1"/>
</dbReference>
<dbReference type="Pfam" id="PF13534">
    <property type="entry name" value="Fer4_17"/>
    <property type="match status" value="1"/>
</dbReference>
<dbReference type="SUPFAM" id="SSF54292">
    <property type="entry name" value="2Fe-2S ferredoxin-like"/>
    <property type="match status" value="1"/>
</dbReference>
<dbReference type="SUPFAM" id="SSF46548">
    <property type="entry name" value="alpha-helical ferredoxin"/>
    <property type="match status" value="1"/>
</dbReference>
<dbReference type="PROSITE" id="PS00197">
    <property type="entry name" value="2FE2S_FER_1"/>
    <property type="match status" value="1"/>
</dbReference>
<dbReference type="PROSITE" id="PS51085">
    <property type="entry name" value="2FE2S_FER_2"/>
    <property type="match status" value="1"/>
</dbReference>
<dbReference type="PROSITE" id="PS00198">
    <property type="entry name" value="4FE4S_FER_1"/>
    <property type="match status" value="1"/>
</dbReference>
<dbReference type="PROSITE" id="PS51379">
    <property type="entry name" value="4FE4S_FER_2"/>
    <property type="match status" value="1"/>
</dbReference>
<sequence>MASGLIGRLVGTKPSKLATAARLIPARWTSTGAEAETKASSGGGRGSNLKTFQIYRWNPDNPGKPELQNYQIDLKDCGPMVLDALIKIKNEMDPSLTFRRSCREGICGSCAMNIDGCNGLACLTKIQDEASETTITPLPHMFVIKDLVVDMTNFYNQYKSIEPWLKRKTPASVPAKEILQSKKDRAKLDGMYECILCACCSTSCPSYWWNPESYLGPAALLHANRWISDSRDEYTKERLEAIDDEFKLYRCHTILNCARACPKGLNPGKQITHIKQLQR</sequence>